<protein>
    <recommendedName>
        <fullName evidence="28">Myocyte-specific enhancer factor 2C</fullName>
    </recommendedName>
    <alternativeName>
        <fullName evidence="29">Myocyte enhancer factor 2C</fullName>
    </alternativeName>
</protein>
<reference key="1">
    <citation type="journal article" date="1993" name="Proc. Natl. Acad. Sci. U.S.A.">
        <title>MEF2C, a MADS/MEF2-family transcription factor expressed in a laminar distribution in cerebral cortex.</title>
        <authorList>
            <person name="Leifer D."/>
            <person name="Krainc D."/>
            <person name="Yu Y.-T."/>
            <person name="McDermott J."/>
            <person name="Breitbart R.E."/>
            <person name="Heng J."/>
            <person name="Neve R.L."/>
            <person name="Kosofsky B."/>
            <person name="Nadal-Ginard B."/>
            <person name="Lipton S.A."/>
        </authorList>
    </citation>
    <scope>NUCLEOTIDE SEQUENCE [MRNA] (ISOFORMS 1; 2 AND 3)</scope>
    <source>
        <tissue>Fetal brain</tissue>
        <tissue>Muscle</tissue>
    </source>
</reference>
<reference key="2">
    <citation type="journal article" date="1993" name="Mol. Cell. Biol.">
        <title>hMEF2C gene encodes skeletal muscle- and brain-specific transcription factors.</title>
        <authorList>
            <person name="McDermott J.C."/>
            <person name="Cardoso M.C."/>
            <person name="Yu Y.-T."/>
            <person name="Andres V."/>
            <person name="Leifer D."/>
            <person name="Krainc D."/>
            <person name="Lipton S.A."/>
            <person name="Nadal-Ginard B."/>
        </authorList>
    </citation>
    <scope>NUCLEOTIDE SEQUENCE [MRNA] (ISOFORM 2)</scope>
    <source>
        <tissue>Skeletal muscle</tissue>
    </source>
</reference>
<reference key="3">
    <citation type="submission" date="2008-05" db="EMBL/GenBank/DDBJ databases">
        <title>Identification and characterization of a new splice variant of human MEF2C.</title>
        <authorList>
            <person name="Infantino V."/>
            <person name="Convertini P."/>
            <person name="Palmieri F."/>
            <person name="Iacobazzi V."/>
        </authorList>
    </citation>
    <scope>NUCLEOTIDE SEQUENCE [MRNA] (ISOFORM 4)</scope>
    <source>
        <tissue>Skeletal muscle</tissue>
    </source>
</reference>
<reference key="4">
    <citation type="journal article" date="2007" name="BMC Genomics">
        <title>The full-ORF clone resource of the German cDNA consortium.</title>
        <authorList>
            <person name="Bechtel S."/>
            <person name="Rosenfelder H."/>
            <person name="Duda A."/>
            <person name="Schmidt C.P."/>
            <person name="Ernst U."/>
            <person name="Wellenreuther R."/>
            <person name="Mehrle A."/>
            <person name="Schuster C."/>
            <person name="Bahr A."/>
            <person name="Bloecker H."/>
            <person name="Heubner D."/>
            <person name="Hoerlein A."/>
            <person name="Michel G."/>
            <person name="Wedler H."/>
            <person name="Koehrer K."/>
            <person name="Ottenwaelder B."/>
            <person name="Poustka A."/>
            <person name="Wiemann S."/>
            <person name="Schupp I."/>
        </authorList>
    </citation>
    <scope>NUCLEOTIDE SEQUENCE [LARGE SCALE MRNA] (ISOFORMS 5 AND 6)</scope>
    <source>
        <tissue>Skeletal muscle</tissue>
    </source>
</reference>
<reference key="5">
    <citation type="journal article" date="2004" name="Nature">
        <title>The DNA sequence and comparative analysis of human chromosome 5.</title>
        <authorList>
            <person name="Schmutz J."/>
            <person name="Martin J."/>
            <person name="Terry A."/>
            <person name="Couronne O."/>
            <person name="Grimwood J."/>
            <person name="Lowry S."/>
            <person name="Gordon L.A."/>
            <person name="Scott D."/>
            <person name="Xie G."/>
            <person name="Huang W."/>
            <person name="Hellsten U."/>
            <person name="Tran-Gyamfi M."/>
            <person name="She X."/>
            <person name="Prabhakar S."/>
            <person name="Aerts A."/>
            <person name="Altherr M."/>
            <person name="Bajorek E."/>
            <person name="Black S."/>
            <person name="Branscomb E."/>
            <person name="Caoile C."/>
            <person name="Challacombe J.F."/>
            <person name="Chan Y.M."/>
            <person name="Denys M."/>
            <person name="Detter J.C."/>
            <person name="Escobar J."/>
            <person name="Flowers D."/>
            <person name="Fotopulos D."/>
            <person name="Glavina T."/>
            <person name="Gomez M."/>
            <person name="Gonzales E."/>
            <person name="Goodstein D."/>
            <person name="Grigoriev I."/>
            <person name="Groza M."/>
            <person name="Hammon N."/>
            <person name="Hawkins T."/>
            <person name="Haydu L."/>
            <person name="Israni S."/>
            <person name="Jett J."/>
            <person name="Kadner K."/>
            <person name="Kimball H."/>
            <person name="Kobayashi A."/>
            <person name="Lopez F."/>
            <person name="Lou Y."/>
            <person name="Martinez D."/>
            <person name="Medina C."/>
            <person name="Morgan J."/>
            <person name="Nandkeshwar R."/>
            <person name="Noonan J.P."/>
            <person name="Pitluck S."/>
            <person name="Pollard M."/>
            <person name="Predki P."/>
            <person name="Priest J."/>
            <person name="Ramirez L."/>
            <person name="Retterer J."/>
            <person name="Rodriguez A."/>
            <person name="Rogers S."/>
            <person name="Salamov A."/>
            <person name="Salazar A."/>
            <person name="Thayer N."/>
            <person name="Tice H."/>
            <person name="Tsai M."/>
            <person name="Ustaszewska A."/>
            <person name="Vo N."/>
            <person name="Wheeler J."/>
            <person name="Wu K."/>
            <person name="Yang J."/>
            <person name="Dickson M."/>
            <person name="Cheng J.-F."/>
            <person name="Eichler E.E."/>
            <person name="Olsen A."/>
            <person name="Pennacchio L.A."/>
            <person name="Rokhsar D.S."/>
            <person name="Richardson P."/>
            <person name="Lucas S.M."/>
            <person name="Myers R.M."/>
            <person name="Rubin E.M."/>
        </authorList>
    </citation>
    <scope>NUCLEOTIDE SEQUENCE [LARGE SCALE GENOMIC DNA]</scope>
</reference>
<reference key="6">
    <citation type="journal article" date="1997" name="EMBO J.">
        <title>BMK1/ERK5 regulates serum-induced early gene expression through transcription factor MEF2C.</title>
        <authorList>
            <person name="Kato Y."/>
            <person name="Kravchenko V.V."/>
            <person name="Tapping R.I."/>
            <person name="Han J."/>
            <person name="Ulevitch R.J."/>
            <person name="Lee J.-D."/>
        </authorList>
    </citation>
    <scope>PHOSPHORYLATION AT THR-293; THR-300 AND SER-419</scope>
    <scope>FUNCTION</scope>
    <scope>MUTAGENESIS OF THR-293; THR-300 AND SER-419</scope>
</reference>
<reference key="7">
    <citation type="journal article" date="1997" name="Nature">
        <title>Activation of the transcription factor MEF2C by the MAP kinase p38 in inflammation.</title>
        <authorList>
            <person name="Han J."/>
            <person name="Jiang Y."/>
            <person name="Li Z."/>
            <person name="Kravchenko V.V."/>
            <person name="Ulevitch R.J."/>
        </authorList>
    </citation>
    <scope>PHOSPHORYLATION AT THR-293; THR-300 AND SER-419</scope>
    <scope>FUNCTION</scope>
    <scope>MUTAGENESIS OF THR-293; THR-300 AND SER-419</scope>
</reference>
<reference key="8">
    <citation type="journal article" date="1998" name="Mol. Immunol.">
        <title>Characterization of myocyte enhancer factor 2 (MEF2) expression in B and T cells: MEF2C is a B cell-restricted transcription factor in lymphocytes.</title>
        <authorList>
            <person name="Swanson B.J."/>
            <person name="Jaeck H.-M."/>
            <person name="Lyons G.E."/>
        </authorList>
    </citation>
    <scope>TISSUE SPECIFICITY</scope>
</reference>
<reference key="9">
    <citation type="journal article" date="1999" name="Mol. Cell. Biol.">
        <title>HDAC4, a human histone deacetylase related to yeast HDA1, is a transcriptional corepressor.</title>
        <authorList>
            <person name="Wang A.H."/>
            <person name="Bertos N.R."/>
            <person name="Vezmar M."/>
            <person name="Pelletier N."/>
            <person name="Crosato M."/>
            <person name="Heng H.H."/>
            <person name="Th'ng J."/>
            <person name="Han J."/>
            <person name="Yang X.-J."/>
        </authorList>
    </citation>
    <scope>INTERACTION WITH HDAC4</scope>
</reference>
<reference key="10">
    <citation type="journal article" date="2000" name="J. Biol. Chem.">
        <title>Big mitogen-activated kinase regulates multiple members of the MEF2 protein family.</title>
        <authorList>
            <person name="Kato Y."/>
            <person name="Zhao M."/>
            <person name="Morikawa A."/>
            <person name="Sugiyama T."/>
            <person name="Chakravortty D."/>
            <person name="Koide N."/>
            <person name="Yoshida T."/>
            <person name="Tapping R.I."/>
            <person name="Yang Y."/>
            <person name="Yokochi T."/>
            <person name="Lee J.D."/>
        </authorList>
    </citation>
    <scope>PHOSPHORYLATION BY MAPK7</scope>
</reference>
<reference key="11">
    <citation type="journal article" date="2001" name="Proc. Natl. Acad. Sci. U.S.A.">
        <title>Cloning and characterization of a histone deacetylase, HDAC9.</title>
        <authorList>
            <person name="Zhou X."/>
            <person name="Marks P.A."/>
            <person name="Rifkind R.A."/>
            <person name="Richon V.M."/>
        </authorList>
    </citation>
    <scope>INTERACTION WITH HDAC9</scope>
</reference>
<reference key="12">
    <citation type="journal article" date="2002" name="Proc. Natl. Acad. Sci. U.S.A.">
        <title>Dominant-interfering forms of MEF2 generated by caspase cleavage contribute to NMDA-induced neuronal apoptosis.</title>
        <authorList>
            <person name="Okamoto S."/>
            <person name="Li Z."/>
            <person name="Ju C."/>
            <person name="Scholzke M.N."/>
            <person name="Mathews E."/>
            <person name="Cui J."/>
            <person name="Salvesen G.S."/>
            <person name="Bossy-Wetzel E."/>
            <person name="Lipton S.A."/>
        </authorList>
    </citation>
    <scope>PROTEOLYTIC PROCESSING AT ASP-432</scope>
    <scope>FUNCTION</scope>
    <scope>MUTAGENESIS OF ASP-432</scope>
</reference>
<reference key="13">
    <citation type="journal article" date="2004" name="Mol. Cell. Biol.">
        <title>Phosphorylation and alternative pre-mRNA splicing converge to regulate myocyte enhancer factor 2C activity.</title>
        <authorList>
            <person name="Zhu B."/>
            <person name="Gulick T."/>
        </authorList>
    </citation>
    <scope>PHOSPHORYLATION AT SER-396</scope>
    <scope>IDENTIFICATION BY MASS SPECTROMETRY</scope>
    <scope>MUTAGENESIS OF SER-396</scope>
    <scope>FUNCTION OF ISOFORMS</scope>
</reference>
<reference key="14">
    <citation type="journal article" date="2005" name="FEBS Lett.">
        <title>MEF2C DNA-binding activity is inhibited through its interaction with the regulatory protein Ki-1/57.</title>
        <authorList>
            <person name="Kobarg C.B."/>
            <person name="Kobarg J."/>
            <person name="Crosara-Alberto D.P."/>
            <person name="Theizen T.H."/>
            <person name="Franchini K.G."/>
        </authorList>
    </citation>
    <scope>INTERACTION WITH HABP4</scope>
</reference>
<reference key="15">
    <citation type="journal article" date="2005" name="J. Biol. Chem.">
        <title>Systematic identification and analysis of mammalian small ubiquitin-like modifier substrates.</title>
        <authorList>
            <person name="Gocke C.B."/>
            <person name="Yu H."/>
            <person name="Kang J."/>
        </authorList>
    </citation>
    <scope>SUMOYLATION</scope>
</reference>
<reference key="16">
    <citation type="journal article" date="2005" name="J. Biol. Chem.">
        <title>Alternative pre-mRNA splicing governs expression of a conserved acidic transactivation domain in myocyte enhancer factor 2 factors of striated muscle and brain.</title>
        <authorList>
            <person name="Zhu B."/>
            <person name="Ramachandran B."/>
            <person name="Gulick T."/>
        </authorList>
    </citation>
    <scope>FUNCTION OF BETA DOMAIN</scope>
    <scope>MUTAGENESIS OF SER-271; GLU-272; ASP-273; ASP-275; SER-387 AND SER-396</scope>
</reference>
<reference key="17">
    <citation type="journal article" date="2005" name="Mol. Cell. Biol.">
        <title>Association with class IIa histone deacetylases upregulates the sumoylation of MEF2 transcription factors.</title>
        <authorList>
            <person name="Gregoire S."/>
            <person name="Yang X.-J."/>
        </authorList>
    </citation>
    <scope>SUMOYLATION AT LYS-391</scope>
</reference>
<reference key="18">
    <citation type="journal article" date="2005" name="Mol. Cell. Biol.">
        <title>Myocyte enhancer factor 2 acetylation by p300 enhances its DNA binding activity, transcriptional activity, and myogenic differentiation.</title>
        <authorList>
            <person name="Ma K."/>
            <person name="Chan J.K."/>
            <person name="Zhu G."/>
            <person name="Wu Z."/>
        </authorList>
    </citation>
    <scope>ACETYLATION AT LYS-116; LYS-119; LYS-234; LYS-239; LYS-252 AND LYS-264</scope>
    <scope>INTERACTION WITH EP300</scope>
    <scope>FUNCTION</scope>
    <scope>DNA-BINDING</scope>
    <scope>MUTAGENESIS OF LYS-116; LYS-119; LYS-234; LYS-239; LYS-252 AND LYS-264</scope>
</reference>
<reference key="19">
    <citation type="journal article" date="2006" name="BMC Biochem.">
        <title>Phosphorylation-facilitated sumoylation of MEF2C negatively regulates its transcriptional activity.</title>
        <authorList>
            <person name="Kang J."/>
            <person name="Gocke C.B."/>
            <person name="Yu H."/>
        </authorList>
    </citation>
    <scope>SUMOYLATION AT LYS-391</scope>
    <scope>MUTAGENESIS OF LYS-391 AND SER-396</scope>
</reference>
<reference key="20">
    <citation type="journal article" date="2010" name="J. Med. Genet.">
        <title>MEF2C haploinsufficiency caused by either microdeletion of the 5q14.3 region or mutation is responsible for severe mental retardation with stereotypic movements, epilepsy and/or cerebral malformations.</title>
        <authorList>
            <person name="Le Meur N."/>
            <person name="Holder-Espinasse M."/>
            <person name="Jaillard S."/>
            <person name="Goldenberg A."/>
            <person name="Joriot S."/>
            <person name="Amati-Bonneau P."/>
            <person name="Guichet A."/>
            <person name="Barth M."/>
            <person name="Charollais A."/>
            <person name="Journel H."/>
            <person name="Auvin S."/>
            <person name="Boucher C."/>
            <person name="Kerckaert J.P."/>
            <person name="David V."/>
            <person name="Manouvrier-Hanu S."/>
            <person name="Saugier-Veber P."/>
            <person name="Frebourg T."/>
            <person name="Dubourg C."/>
            <person name="Andrieux J."/>
            <person name="Bonneau D."/>
        </authorList>
    </citation>
    <scope>INVOLVEMENT IN NEDHSIL</scope>
</reference>
<reference key="21">
    <citation type="journal article" date="2013" name="J. Proteome Res.">
        <title>Toward a comprehensive characterization of a human cancer cell phosphoproteome.</title>
        <authorList>
            <person name="Zhou H."/>
            <person name="Di Palma S."/>
            <person name="Preisinger C."/>
            <person name="Peng M."/>
            <person name="Polat A.N."/>
            <person name="Heck A.J."/>
            <person name="Mohammed S."/>
        </authorList>
    </citation>
    <scope>PHOSPHORYLATION [LARGE SCALE ANALYSIS] AT SER-222; SER-228; SER-240 AND SER-445</scope>
    <scope>IDENTIFICATION BY MASS SPECTROMETRY [LARGE SCALE ANALYSIS]</scope>
    <source>
        <tissue>Erythroleukemia</tissue>
    </source>
</reference>
<reference key="22">
    <citation type="journal article" date="2013" name="Nat. Genet.">
        <title>Targeted resequencing in epileptic encephalopathies identifies de novo mutations in CHD2 and SYNGAP1.</title>
        <authorList>
            <person name="Carvill G.L."/>
            <person name="Heavin S.B."/>
            <person name="Yendle S.C."/>
            <person name="McMahon J.M."/>
            <person name="O'Roak B.J."/>
            <person name="Cook J."/>
            <person name="Khan A."/>
            <person name="Dorschner M.O."/>
            <person name="Weaver M."/>
            <person name="Calvert S."/>
            <person name="Malone S."/>
            <person name="Wallace G."/>
            <person name="Stanley T."/>
            <person name="Bye A.M."/>
            <person name="Bleasel A."/>
            <person name="Howell K.B."/>
            <person name="Kivity S."/>
            <person name="Mackay M.T."/>
            <person name="Rodriguez-Casero V."/>
            <person name="Webster R."/>
            <person name="Korczyn A."/>
            <person name="Afawi Z."/>
            <person name="Zelnick N."/>
            <person name="Lerman-Sagie T."/>
            <person name="Lev D."/>
            <person name="Moeller R.S."/>
            <person name="Gill D."/>
            <person name="Andrade D.M."/>
            <person name="Freeman J.L."/>
            <person name="Sadleir L.G."/>
            <person name="Shendure J."/>
            <person name="Berkovic S.F."/>
            <person name="Scheffer I.E."/>
            <person name="Mefford H.C."/>
        </authorList>
    </citation>
    <scope>VARIANT ARG-39</scope>
</reference>
<reference key="23">
    <citation type="journal article" date="2017" name="Hum. Mutat.">
        <title>Diagnostic targeted resequencing in 349 patients with drug-resistant pediatric epilepsies identifies causative mutations in 30 different genes.</title>
        <authorList>
            <consortium name="Clinical Study Group"/>
            <person name="Parrini E."/>
            <person name="Marini C."/>
            <person name="Mei D."/>
            <person name="Galuppi A."/>
            <person name="Cellini E."/>
            <person name="Pucatti D."/>
            <person name="Chiti L."/>
            <person name="Rutigliano D."/>
            <person name="Bianchini C."/>
            <person name="Virdo S."/>
            <person name="De Vita D."/>
            <person name="Bigoni S."/>
            <person name="Barba C."/>
            <person name="Mari F."/>
            <person name="Montomoli M."/>
            <person name="Pisano T."/>
            <person name="Rosati A."/>
            <person name="Guerrini R."/>
        </authorList>
    </citation>
    <scope>VARIANT ARG-36</scope>
</reference>
<accession>Q06413</accession>
<accession>C9JMZ0</accession>
<accession>D7F7N5</accession>
<accession>F8W7V7</accession>
<organism>
    <name type="scientific">Homo sapiens</name>
    <name type="common">Human</name>
    <dbReference type="NCBI Taxonomy" id="9606"/>
    <lineage>
        <taxon>Eukaryota</taxon>
        <taxon>Metazoa</taxon>
        <taxon>Chordata</taxon>
        <taxon>Craniata</taxon>
        <taxon>Vertebrata</taxon>
        <taxon>Euteleostomi</taxon>
        <taxon>Mammalia</taxon>
        <taxon>Eutheria</taxon>
        <taxon>Euarchontoglires</taxon>
        <taxon>Primates</taxon>
        <taxon>Haplorrhini</taxon>
        <taxon>Catarrhini</taxon>
        <taxon>Hominidae</taxon>
        <taxon>Homo</taxon>
    </lineage>
</organism>
<proteinExistence type="evidence at protein level"/>
<dbReference type="EMBL" id="L08895">
    <property type="protein sequence ID" value="AAA59578.1"/>
    <property type="molecule type" value="mRNA"/>
</dbReference>
<dbReference type="EMBL" id="S57212">
    <property type="protein sequence ID" value="AAB25838.1"/>
    <property type="molecule type" value="mRNA"/>
</dbReference>
<dbReference type="EMBL" id="FM163484">
    <property type="protein sequence ID" value="CAQ57795.2"/>
    <property type="molecule type" value="mRNA"/>
</dbReference>
<dbReference type="EMBL" id="AL833268">
    <property type="status" value="NOT_ANNOTATED_CDS"/>
    <property type="molecule type" value="mRNA"/>
</dbReference>
<dbReference type="EMBL" id="AL833274">
    <property type="status" value="NOT_ANNOTATED_CDS"/>
    <property type="molecule type" value="mRNA"/>
</dbReference>
<dbReference type="EMBL" id="AC008525">
    <property type="status" value="NOT_ANNOTATED_CDS"/>
    <property type="molecule type" value="Genomic_DNA"/>
</dbReference>
<dbReference type="EMBL" id="AC008835">
    <property type="status" value="NOT_ANNOTATED_CDS"/>
    <property type="molecule type" value="Genomic_DNA"/>
</dbReference>
<dbReference type="CCDS" id="CCDS47244.1">
    <molecule id="Q06413-6"/>
</dbReference>
<dbReference type="CCDS" id="CCDS47245.1">
    <molecule id="Q06413-1"/>
</dbReference>
<dbReference type="CCDS" id="CCDS54877.1">
    <molecule id="Q06413-4"/>
</dbReference>
<dbReference type="CCDS" id="CCDS54878.1">
    <molecule id="Q06413-5"/>
</dbReference>
<dbReference type="CCDS" id="CCDS78034.1">
    <molecule id="Q06413-2"/>
</dbReference>
<dbReference type="CCDS" id="CCDS87313.1">
    <molecule id="Q06413-3"/>
</dbReference>
<dbReference type="PIR" id="A47284">
    <property type="entry name" value="A47284"/>
</dbReference>
<dbReference type="RefSeq" id="NP_001124477.1">
    <molecule id="Q06413-6"/>
    <property type="nucleotide sequence ID" value="NM_001131005.2"/>
</dbReference>
<dbReference type="RefSeq" id="NP_001180276.1">
    <molecule id="Q06413-5"/>
    <property type="nucleotide sequence ID" value="NM_001193347.1"/>
</dbReference>
<dbReference type="RefSeq" id="NP_001180277.1">
    <molecule id="Q06413-4"/>
    <property type="nucleotide sequence ID" value="NM_001193348.1"/>
</dbReference>
<dbReference type="RefSeq" id="NP_001180278.1">
    <property type="nucleotide sequence ID" value="NM_001193349.1"/>
</dbReference>
<dbReference type="RefSeq" id="NP_001180279.1">
    <molecule id="Q06413-1"/>
    <property type="nucleotide sequence ID" value="NM_001193350.2"/>
</dbReference>
<dbReference type="RefSeq" id="NP_001294931.1">
    <molecule id="Q06413-2"/>
    <property type="nucleotide sequence ID" value="NM_001308002.3"/>
</dbReference>
<dbReference type="RefSeq" id="NP_001350510.1">
    <molecule id="Q06413-3"/>
    <property type="nucleotide sequence ID" value="NM_001363581.2"/>
</dbReference>
<dbReference type="RefSeq" id="NP_001351258.1">
    <molecule id="Q06413-1"/>
    <property type="nucleotide sequence ID" value="NM_001364329.2"/>
</dbReference>
<dbReference type="RefSeq" id="NP_001351259.1">
    <molecule id="Q06413-1"/>
    <property type="nucleotide sequence ID" value="NM_001364330.2"/>
</dbReference>
<dbReference type="RefSeq" id="NP_001351260.1">
    <molecule id="Q06413-1"/>
    <property type="nucleotide sequence ID" value="NM_001364331.2"/>
</dbReference>
<dbReference type="RefSeq" id="NP_001351262.1">
    <molecule id="Q06413-2"/>
    <property type="nucleotide sequence ID" value="NM_001364333.2"/>
</dbReference>
<dbReference type="RefSeq" id="NP_001351263.1">
    <molecule id="Q06413-3"/>
    <property type="nucleotide sequence ID" value="NM_001364334.2"/>
</dbReference>
<dbReference type="RefSeq" id="NP_001351264.1">
    <molecule id="Q06413-3"/>
    <property type="nucleotide sequence ID" value="NM_001364335.2"/>
</dbReference>
<dbReference type="RefSeq" id="NP_001351265.1">
    <molecule id="Q06413-3"/>
    <property type="nucleotide sequence ID" value="NM_001364336.2"/>
</dbReference>
<dbReference type="RefSeq" id="NP_001351266.1">
    <molecule id="Q06413-3"/>
    <property type="nucleotide sequence ID" value="NM_001364337.2"/>
</dbReference>
<dbReference type="RefSeq" id="NP_002388.2">
    <molecule id="Q06413-1"/>
    <property type="nucleotide sequence ID" value="NM_002397.4"/>
</dbReference>
<dbReference type="RefSeq" id="XP_005248568.1">
    <molecule id="Q06413-1"/>
    <property type="nucleotide sequence ID" value="XM_005248511.4"/>
</dbReference>
<dbReference type="RefSeq" id="XP_006714682.1">
    <property type="nucleotide sequence ID" value="XM_006714619.2"/>
</dbReference>
<dbReference type="RefSeq" id="XP_006714688.1">
    <property type="nucleotide sequence ID" value="XM_006714625.3"/>
</dbReference>
<dbReference type="RefSeq" id="XP_011541698.1">
    <molecule id="Q06413-1"/>
    <property type="nucleotide sequence ID" value="XM_011543396.4"/>
</dbReference>
<dbReference type="RefSeq" id="XP_011541702.1">
    <property type="nucleotide sequence ID" value="XM_011543400.1"/>
</dbReference>
<dbReference type="RefSeq" id="XP_016864965.1">
    <property type="nucleotide sequence ID" value="XM_017009476.1"/>
</dbReference>
<dbReference type="RefSeq" id="XP_016864966.1">
    <property type="nucleotide sequence ID" value="XM_017009477.1"/>
</dbReference>
<dbReference type="RefSeq" id="XP_016864967.1">
    <molecule id="Q06413-6"/>
    <property type="nucleotide sequence ID" value="XM_017009478.3"/>
</dbReference>
<dbReference type="RefSeq" id="XP_016864968.1">
    <property type="nucleotide sequence ID" value="XM_017009479.1"/>
</dbReference>
<dbReference type="RefSeq" id="XP_016864969.1">
    <property type="nucleotide sequence ID" value="XM_017009480.1"/>
</dbReference>
<dbReference type="RefSeq" id="XP_016864970.1">
    <property type="nucleotide sequence ID" value="XM_017009481.1"/>
</dbReference>
<dbReference type="RefSeq" id="XP_024301823.1">
    <molecule id="Q06413-1"/>
    <property type="nucleotide sequence ID" value="XM_024446055.2"/>
</dbReference>
<dbReference type="RefSeq" id="XP_024301824.1">
    <molecule id="Q06413-1"/>
    <property type="nucleotide sequence ID" value="XM_024446056.2"/>
</dbReference>
<dbReference type="RefSeq" id="XP_047273137.1">
    <molecule id="Q06413-1"/>
    <property type="nucleotide sequence ID" value="XM_047417181.1"/>
</dbReference>
<dbReference type="RefSeq" id="XP_047273138.1">
    <molecule id="Q06413-1"/>
    <property type="nucleotide sequence ID" value="XM_047417182.1"/>
</dbReference>
<dbReference type="RefSeq" id="XP_047273139.1">
    <molecule id="Q06413-1"/>
    <property type="nucleotide sequence ID" value="XM_047417183.1"/>
</dbReference>
<dbReference type="RefSeq" id="XP_047273140.1">
    <molecule id="Q06413-1"/>
    <property type="nucleotide sequence ID" value="XM_047417184.1"/>
</dbReference>
<dbReference type="RefSeq" id="XP_047273141.1">
    <molecule id="Q06413-1"/>
    <property type="nucleotide sequence ID" value="XM_047417185.1"/>
</dbReference>
<dbReference type="RefSeq" id="XP_047273142.1">
    <molecule id="Q06413-1"/>
    <property type="nucleotide sequence ID" value="XM_047417186.1"/>
</dbReference>
<dbReference type="RefSeq" id="XP_047273143.1">
    <molecule id="Q06413-1"/>
    <property type="nucleotide sequence ID" value="XM_047417187.1"/>
</dbReference>
<dbReference type="RefSeq" id="XP_047273144.1">
    <molecule id="Q06413-1"/>
    <property type="nucleotide sequence ID" value="XM_047417188.1"/>
</dbReference>
<dbReference type="RefSeq" id="XP_047273146.1">
    <molecule id="Q06413-2"/>
    <property type="nucleotide sequence ID" value="XM_047417190.1"/>
</dbReference>
<dbReference type="RefSeq" id="XP_047273147.1">
    <molecule id="Q06413-2"/>
    <property type="nucleotide sequence ID" value="XM_047417191.1"/>
</dbReference>
<dbReference type="RefSeq" id="XP_047273148.1">
    <molecule id="Q06413-2"/>
    <property type="nucleotide sequence ID" value="XM_047417192.1"/>
</dbReference>
<dbReference type="RefSeq" id="XP_047273149.1">
    <molecule id="Q06413-2"/>
    <property type="nucleotide sequence ID" value="XM_047417193.1"/>
</dbReference>
<dbReference type="RefSeq" id="XP_047273150.1">
    <molecule id="Q06413-2"/>
    <property type="nucleotide sequence ID" value="XM_047417194.1"/>
</dbReference>
<dbReference type="RefSeq" id="XP_047273151.1">
    <molecule id="Q06413-2"/>
    <property type="nucleotide sequence ID" value="XM_047417195.1"/>
</dbReference>
<dbReference type="RefSeq" id="XP_047273152.1">
    <molecule id="Q06413-2"/>
    <property type="nucleotide sequence ID" value="XM_047417196.1"/>
</dbReference>
<dbReference type="RefSeq" id="XP_047273153.1">
    <molecule id="Q06413-2"/>
    <property type="nucleotide sequence ID" value="XM_047417197.1"/>
</dbReference>
<dbReference type="RefSeq" id="XP_047273154.1">
    <molecule id="Q06413-2"/>
    <property type="nucleotide sequence ID" value="XM_047417198.1"/>
</dbReference>
<dbReference type="RefSeq" id="XP_047273155.1">
    <molecule id="Q06413-2"/>
    <property type="nucleotide sequence ID" value="XM_047417199.1"/>
</dbReference>
<dbReference type="RefSeq" id="XP_047273156.1">
    <molecule id="Q06413-2"/>
    <property type="nucleotide sequence ID" value="XM_047417200.1"/>
</dbReference>
<dbReference type="RefSeq" id="XP_047273157.1">
    <molecule id="Q06413-2"/>
    <property type="nucleotide sequence ID" value="XM_047417201.1"/>
</dbReference>
<dbReference type="RefSeq" id="XP_047273158.1">
    <molecule id="Q06413-6"/>
    <property type="nucleotide sequence ID" value="XM_047417202.1"/>
</dbReference>
<dbReference type="RefSeq" id="XP_047273159.1">
    <molecule id="Q06413-6"/>
    <property type="nucleotide sequence ID" value="XM_047417203.1"/>
</dbReference>
<dbReference type="RefSeq" id="XP_047273160.1">
    <molecule id="Q06413-3"/>
    <property type="nucleotide sequence ID" value="XM_047417204.1"/>
</dbReference>
<dbReference type="RefSeq" id="XP_047273161.1">
    <molecule id="Q06413-3"/>
    <property type="nucleotide sequence ID" value="XM_047417205.1"/>
</dbReference>
<dbReference type="RefSeq" id="XP_054208574.1">
    <molecule id="Q06413-1"/>
    <property type="nucleotide sequence ID" value="XM_054352599.1"/>
</dbReference>
<dbReference type="RefSeq" id="XP_054208575.1">
    <molecule id="Q06413-1"/>
    <property type="nucleotide sequence ID" value="XM_054352600.1"/>
</dbReference>
<dbReference type="RefSeq" id="XP_054208576.1">
    <molecule id="Q06413-1"/>
    <property type="nucleotide sequence ID" value="XM_054352601.1"/>
</dbReference>
<dbReference type="RefSeq" id="XP_054208577.1">
    <molecule id="Q06413-1"/>
    <property type="nucleotide sequence ID" value="XM_054352602.1"/>
</dbReference>
<dbReference type="RefSeq" id="XP_054208578.1">
    <molecule id="Q06413-1"/>
    <property type="nucleotide sequence ID" value="XM_054352603.1"/>
</dbReference>
<dbReference type="RefSeq" id="XP_054208579.1">
    <molecule id="Q06413-1"/>
    <property type="nucleotide sequence ID" value="XM_054352604.1"/>
</dbReference>
<dbReference type="RefSeq" id="XP_054208580.1">
    <molecule id="Q06413-1"/>
    <property type="nucleotide sequence ID" value="XM_054352605.1"/>
</dbReference>
<dbReference type="RefSeq" id="XP_054208581.1">
    <molecule id="Q06413-1"/>
    <property type="nucleotide sequence ID" value="XM_054352606.1"/>
</dbReference>
<dbReference type="RefSeq" id="XP_054208582.1">
    <molecule id="Q06413-1"/>
    <property type="nucleotide sequence ID" value="XM_054352607.1"/>
</dbReference>
<dbReference type="RefSeq" id="XP_054208583.1">
    <molecule id="Q06413-1"/>
    <property type="nucleotide sequence ID" value="XM_054352608.1"/>
</dbReference>
<dbReference type="RefSeq" id="XP_054208584.1">
    <molecule id="Q06413-1"/>
    <property type="nucleotide sequence ID" value="XM_054352609.1"/>
</dbReference>
<dbReference type="RefSeq" id="XP_054208585.1">
    <molecule id="Q06413-1"/>
    <property type="nucleotide sequence ID" value="XM_054352610.1"/>
</dbReference>
<dbReference type="RefSeq" id="XP_054208586.1">
    <molecule id="Q06413-1"/>
    <property type="nucleotide sequence ID" value="XM_054352611.1"/>
</dbReference>
<dbReference type="RefSeq" id="XP_054208587.1">
    <molecule id="Q06413-1"/>
    <property type="nucleotide sequence ID" value="XM_054352612.1"/>
</dbReference>
<dbReference type="RefSeq" id="XP_054208588.1">
    <molecule id="Q06413-1"/>
    <property type="nucleotide sequence ID" value="XM_054352613.1"/>
</dbReference>
<dbReference type="RefSeq" id="XP_054208592.1">
    <molecule id="Q06413-2"/>
    <property type="nucleotide sequence ID" value="XM_054352617.1"/>
</dbReference>
<dbReference type="RefSeq" id="XP_054208593.1">
    <molecule id="Q06413-2"/>
    <property type="nucleotide sequence ID" value="XM_054352618.1"/>
</dbReference>
<dbReference type="RefSeq" id="XP_054208594.1">
    <molecule id="Q06413-2"/>
    <property type="nucleotide sequence ID" value="XM_054352619.1"/>
</dbReference>
<dbReference type="RefSeq" id="XP_054208596.1">
    <molecule id="Q06413-2"/>
    <property type="nucleotide sequence ID" value="XM_054352621.1"/>
</dbReference>
<dbReference type="RefSeq" id="XP_054208598.1">
    <molecule id="Q06413-2"/>
    <property type="nucleotide sequence ID" value="XM_054352623.1"/>
</dbReference>
<dbReference type="RefSeq" id="XP_054208599.1">
    <molecule id="Q06413-2"/>
    <property type="nucleotide sequence ID" value="XM_054352624.1"/>
</dbReference>
<dbReference type="RefSeq" id="XP_054208600.1">
    <molecule id="Q06413-2"/>
    <property type="nucleotide sequence ID" value="XM_054352625.1"/>
</dbReference>
<dbReference type="RefSeq" id="XP_054208601.1">
    <molecule id="Q06413-6"/>
    <property type="nucleotide sequence ID" value="XM_054352626.1"/>
</dbReference>
<dbReference type="RefSeq" id="XP_054208602.1">
    <molecule id="Q06413-6"/>
    <property type="nucleotide sequence ID" value="XM_054352627.1"/>
</dbReference>
<dbReference type="RefSeq" id="XP_054208603.1">
    <molecule id="Q06413-6"/>
    <property type="nucleotide sequence ID" value="XM_054352628.1"/>
</dbReference>
<dbReference type="RefSeq" id="XP_054208604.1">
    <molecule id="Q06413-3"/>
    <property type="nucleotide sequence ID" value="XM_054352629.1"/>
</dbReference>
<dbReference type="RefSeq" id="XP_054208605.1">
    <molecule id="Q06413-3"/>
    <property type="nucleotide sequence ID" value="XM_054352630.1"/>
</dbReference>
<dbReference type="SMR" id="Q06413"/>
<dbReference type="BioGRID" id="110372">
    <property type="interactions" value="38"/>
</dbReference>
<dbReference type="CORUM" id="Q06413"/>
<dbReference type="DIP" id="DIP-40857N"/>
<dbReference type="ELM" id="Q06413"/>
<dbReference type="FunCoup" id="Q06413">
    <property type="interactions" value="3424"/>
</dbReference>
<dbReference type="IntAct" id="Q06413">
    <property type="interactions" value="29"/>
</dbReference>
<dbReference type="MINT" id="Q06413"/>
<dbReference type="STRING" id="9606.ENSP00000340874"/>
<dbReference type="GlyCosmos" id="Q06413">
    <property type="glycosylation" value="1 site, 1 glycan"/>
</dbReference>
<dbReference type="GlyGen" id="Q06413">
    <property type="glycosylation" value="5 sites, 1 O-linked glycan (4 sites)"/>
</dbReference>
<dbReference type="iPTMnet" id="Q06413"/>
<dbReference type="PhosphoSitePlus" id="Q06413"/>
<dbReference type="BioMuta" id="MEF2C"/>
<dbReference type="DMDM" id="2500875"/>
<dbReference type="jPOST" id="Q06413"/>
<dbReference type="MassIVE" id="Q06413"/>
<dbReference type="PaxDb" id="9606-ENSP00000340874"/>
<dbReference type="PeptideAtlas" id="Q06413"/>
<dbReference type="ProteomicsDB" id="10911"/>
<dbReference type="ProteomicsDB" id="30019"/>
<dbReference type="ProteomicsDB" id="58439">
    <molecule id="Q06413-1"/>
</dbReference>
<dbReference type="ProteomicsDB" id="58440">
    <molecule id="Q06413-2"/>
</dbReference>
<dbReference type="ProteomicsDB" id="58441">
    <molecule id="Q06413-3"/>
</dbReference>
<dbReference type="ProteomicsDB" id="58442">
    <molecule id="Q06413-4"/>
</dbReference>
<dbReference type="Pumba" id="Q06413"/>
<dbReference type="Antibodypedia" id="755">
    <property type="antibodies" value="1339 antibodies from 37 providers"/>
</dbReference>
<dbReference type="DNASU" id="4208"/>
<dbReference type="Ensembl" id="ENST00000340208.9">
    <molecule id="Q06413-5"/>
    <property type="protein sequence ID" value="ENSP00000340874.5"/>
    <property type="gene ID" value="ENSG00000081189.17"/>
</dbReference>
<dbReference type="Ensembl" id="ENST00000424173.6">
    <molecule id="Q06413-6"/>
    <property type="protein sequence ID" value="ENSP00000389610.2"/>
    <property type="gene ID" value="ENSG00000081189.17"/>
</dbReference>
<dbReference type="Ensembl" id="ENST00000437473.6">
    <molecule id="Q06413-1"/>
    <property type="protein sequence ID" value="ENSP00000396219.2"/>
    <property type="gene ID" value="ENSG00000081189.17"/>
</dbReference>
<dbReference type="Ensembl" id="ENST00000504921.7">
    <molecule id="Q06413-1"/>
    <property type="protein sequence ID" value="ENSP00000421925.5"/>
    <property type="gene ID" value="ENSG00000081189.17"/>
</dbReference>
<dbReference type="Ensembl" id="ENST00000508569.5">
    <molecule id="Q06413-2"/>
    <property type="protein sequence ID" value="ENSP00000423597.2"/>
    <property type="gene ID" value="ENSG00000081189.17"/>
</dbReference>
<dbReference type="Ensembl" id="ENST00000514015.5">
    <molecule id="Q06413-3"/>
    <property type="protein sequence ID" value="ENSP00000424606.1"/>
    <property type="gene ID" value="ENSG00000081189.17"/>
</dbReference>
<dbReference type="Ensembl" id="ENST00000514028.5">
    <molecule id="Q06413-3"/>
    <property type="protein sequence ID" value="ENSP00000426665.2"/>
    <property type="gene ID" value="ENSG00000081189.17"/>
</dbReference>
<dbReference type="Ensembl" id="ENST00000625674.2">
    <molecule id="Q06413-6"/>
    <property type="protein sequence ID" value="ENSP00000487430.1"/>
    <property type="gene ID" value="ENSG00000081189.17"/>
</dbReference>
<dbReference type="Ensembl" id="ENST00000628656.2">
    <molecule id="Q06413-4"/>
    <property type="protein sequence ID" value="ENSP00000487311.1"/>
    <property type="gene ID" value="ENSG00000081189.17"/>
</dbReference>
<dbReference type="Ensembl" id="ENST00000629612.2">
    <molecule id="Q06413-2"/>
    <property type="protein sequence ID" value="ENSP00000486554.1"/>
    <property type="gene ID" value="ENSG00000081189.17"/>
</dbReference>
<dbReference type="Ensembl" id="ENST00000636294.1">
    <molecule id="Q06413-1"/>
    <property type="protein sequence ID" value="ENSP00000490473.1"/>
    <property type="gene ID" value="ENSG00000081189.17"/>
</dbReference>
<dbReference type="Ensembl" id="ENST00000636998.1">
    <molecule id="Q06413-3"/>
    <property type="protein sequence ID" value="ENSP00000490630.1"/>
    <property type="gene ID" value="ENSG00000081189.17"/>
</dbReference>
<dbReference type="Ensembl" id="ENST00000637732.1">
    <molecule id="Q06413-3"/>
    <property type="protein sequence ID" value="ENSP00000490241.1"/>
    <property type="gene ID" value="ENSG00000081189.17"/>
</dbReference>
<dbReference type="GeneID" id="4208"/>
<dbReference type="KEGG" id="hsa:4208"/>
<dbReference type="MANE-Select" id="ENST00000504921.7">
    <property type="protein sequence ID" value="ENSP00000421925.5"/>
    <property type="RefSeq nucleotide sequence ID" value="NM_002397.5"/>
    <property type="RefSeq protein sequence ID" value="NP_002388.2"/>
</dbReference>
<dbReference type="UCSC" id="uc003kjj.4">
    <molecule id="Q06413-1"/>
    <property type="organism name" value="human"/>
</dbReference>
<dbReference type="AGR" id="HGNC:6996"/>
<dbReference type="CTD" id="4208"/>
<dbReference type="DisGeNET" id="4208"/>
<dbReference type="GeneCards" id="MEF2C"/>
<dbReference type="GeneReviews" id="MEF2C"/>
<dbReference type="HGNC" id="HGNC:6996">
    <property type="gene designation" value="MEF2C"/>
</dbReference>
<dbReference type="HPA" id="ENSG00000081189">
    <property type="expression patterns" value="Tissue enhanced (skeletal muscle, tongue)"/>
</dbReference>
<dbReference type="MalaCards" id="MEF2C"/>
<dbReference type="MIM" id="600662">
    <property type="type" value="gene"/>
</dbReference>
<dbReference type="MIM" id="613443">
    <property type="type" value="phenotype"/>
</dbReference>
<dbReference type="neXtProt" id="NX_Q06413"/>
<dbReference type="OpenTargets" id="ENSG00000081189"/>
<dbReference type="Orphanet" id="228384">
    <property type="disease" value="5q14.3 microdeletion syndrome"/>
</dbReference>
<dbReference type="Orphanet" id="664416">
    <property type="disease" value="Brain abnormalities-severe developmental delay-facial dysmorphism-intellectual disability syndrome due to MEF2C mutation"/>
</dbReference>
<dbReference type="Orphanet" id="576227">
    <property type="disease" value="Complete atrioventricular septal defect without ventricular hypoplasia"/>
</dbReference>
<dbReference type="PharmGKB" id="PA30734"/>
<dbReference type="VEuPathDB" id="HostDB:ENSG00000081189"/>
<dbReference type="eggNOG" id="KOG0014">
    <property type="taxonomic scope" value="Eukaryota"/>
</dbReference>
<dbReference type="GeneTree" id="ENSGT00940000157492"/>
<dbReference type="InParanoid" id="Q06413"/>
<dbReference type="OMA" id="MATNSYS"/>
<dbReference type="OrthoDB" id="1898716at2759"/>
<dbReference type="PAN-GO" id="Q06413">
    <property type="GO annotations" value="6 GO annotations based on evolutionary models"/>
</dbReference>
<dbReference type="PhylomeDB" id="Q06413"/>
<dbReference type="TreeFam" id="TF314067"/>
<dbReference type="PathwayCommons" id="Q06413"/>
<dbReference type="Reactome" id="R-HSA-198753">
    <property type="pathway name" value="ERK/MAPK targets"/>
</dbReference>
<dbReference type="Reactome" id="R-HSA-2151201">
    <property type="pathway name" value="Transcriptional activation of mitochondrial biogenesis"/>
</dbReference>
<dbReference type="Reactome" id="R-HSA-400253">
    <property type="pathway name" value="Circadian Clock"/>
</dbReference>
<dbReference type="Reactome" id="R-HSA-525793">
    <property type="pathway name" value="Myogenesis"/>
</dbReference>
<dbReference type="Reactome" id="R-HSA-9022707">
    <property type="pathway name" value="MECP2 regulates transcription factors"/>
</dbReference>
<dbReference type="Reactome" id="R-HSA-9707616">
    <property type="pathway name" value="Heme signaling"/>
</dbReference>
<dbReference type="Reactome" id="R-HSA-9733709">
    <property type="pathway name" value="Cardiogenesis"/>
</dbReference>
<dbReference type="SignaLink" id="Q06413"/>
<dbReference type="SIGNOR" id="Q06413"/>
<dbReference type="BioGRID-ORCS" id="4208">
    <property type="hits" value="42 hits in 1185 CRISPR screens"/>
</dbReference>
<dbReference type="ChiTaRS" id="MEF2C">
    <property type="organism name" value="human"/>
</dbReference>
<dbReference type="GeneWiki" id="MEF2C"/>
<dbReference type="GenomeRNAi" id="4208"/>
<dbReference type="Pharos" id="Q06413">
    <property type="development level" value="Tbio"/>
</dbReference>
<dbReference type="PRO" id="PR:Q06413"/>
<dbReference type="Proteomes" id="UP000005640">
    <property type="component" value="Chromosome 5"/>
</dbReference>
<dbReference type="RNAct" id="Q06413">
    <property type="molecule type" value="protein"/>
</dbReference>
<dbReference type="Bgee" id="ENSG00000081189">
    <property type="expression patterns" value="Expressed in middle temporal gyrus and 200 other cell types or tissues"/>
</dbReference>
<dbReference type="ExpressionAtlas" id="Q06413">
    <property type="expression patterns" value="baseline and differential"/>
</dbReference>
<dbReference type="GO" id="GO:0000785">
    <property type="term" value="C:chromatin"/>
    <property type="evidence" value="ECO:0000247"/>
    <property type="project" value="NTNU_SB"/>
</dbReference>
<dbReference type="GO" id="GO:0005737">
    <property type="term" value="C:cytoplasm"/>
    <property type="evidence" value="ECO:0000314"/>
    <property type="project" value="UniProtKB"/>
</dbReference>
<dbReference type="GO" id="GO:0005829">
    <property type="term" value="C:cytosol"/>
    <property type="evidence" value="ECO:0000250"/>
    <property type="project" value="Alzheimers_University_of_Toronto"/>
</dbReference>
<dbReference type="GO" id="GO:0043231">
    <property type="term" value="C:intracellular membrane-bounded organelle"/>
    <property type="evidence" value="ECO:0000314"/>
    <property type="project" value="HPA"/>
</dbReference>
<dbReference type="GO" id="GO:0016607">
    <property type="term" value="C:nuclear speck"/>
    <property type="evidence" value="ECO:0000314"/>
    <property type="project" value="BHF-UCL"/>
</dbReference>
<dbReference type="GO" id="GO:0005654">
    <property type="term" value="C:nucleoplasm"/>
    <property type="evidence" value="ECO:0000314"/>
    <property type="project" value="HPA"/>
</dbReference>
<dbReference type="GO" id="GO:0005634">
    <property type="term" value="C:nucleus"/>
    <property type="evidence" value="ECO:0000314"/>
    <property type="project" value="UniProtKB"/>
</dbReference>
<dbReference type="GO" id="GO:0098794">
    <property type="term" value="C:postsynapse"/>
    <property type="evidence" value="ECO:0007669"/>
    <property type="project" value="GOC"/>
</dbReference>
<dbReference type="GO" id="GO:0032991">
    <property type="term" value="C:protein-containing complex"/>
    <property type="evidence" value="ECO:0000314"/>
    <property type="project" value="UniProtKB"/>
</dbReference>
<dbReference type="GO" id="GO:0016528">
    <property type="term" value="C:sarcoplasm"/>
    <property type="evidence" value="ECO:0007669"/>
    <property type="project" value="UniProtKB-SubCell"/>
</dbReference>
<dbReference type="GO" id="GO:0003677">
    <property type="term" value="F:DNA binding"/>
    <property type="evidence" value="ECO:0000314"/>
    <property type="project" value="UniProtKB"/>
</dbReference>
<dbReference type="GO" id="GO:0001228">
    <property type="term" value="F:DNA-binding transcription activator activity, RNA polymerase II-specific"/>
    <property type="evidence" value="ECO:0000314"/>
    <property type="project" value="UniProtKB"/>
</dbReference>
<dbReference type="GO" id="GO:0003700">
    <property type="term" value="F:DNA-binding transcription factor activity"/>
    <property type="evidence" value="ECO:0000314"/>
    <property type="project" value="BHF-UCL"/>
</dbReference>
<dbReference type="GO" id="GO:0000981">
    <property type="term" value="F:DNA-binding transcription factor activity, RNA polymerase II-specific"/>
    <property type="evidence" value="ECO:0000314"/>
    <property type="project" value="UniProtKB"/>
</dbReference>
<dbReference type="GO" id="GO:0140297">
    <property type="term" value="F:DNA-binding transcription factor binding"/>
    <property type="evidence" value="ECO:0000353"/>
    <property type="project" value="UniProtKB"/>
</dbReference>
<dbReference type="GO" id="GO:0042826">
    <property type="term" value="F:histone deacetylase binding"/>
    <property type="evidence" value="ECO:0000318"/>
    <property type="project" value="GO_Central"/>
</dbReference>
<dbReference type="GO" id="GO:0003680">
    <property type="term" value="F:minor groove of adenine-thymine-rich DNA binding"/>
    <property type="evidence" value="ECO:0000314"/>
    <property type="project" value="UniProtKB"/>
</dbReference>
<dbReference type="GO" id="GO:0046982">
    <property type="term" value="F:protein heterodimerization activity"/>
    <property type="evidence" value="ECO:0000353"/>
    <property type="project" value="UniProtKB"/>
</dbReference>
<dbReference type="GO" id="GO:0000978">
    <property type="term" value="F:RNA polymerase II cis-regulatory region sequence-specific DNA binding"/>
    <property type="evidence" value="ECO:0000318"/>
    <property type="project" value="GO_Central"/>
</dbReference>
<dbReference type="GO" id="GO:0000977">
    <property type="term" value="F:RNA polymerase II transcription regulatory region sequence-specific DNA binding"/>
    <property type="evidence" value="ECO:0000314"/>
    <property type="project" value="UniProtKB"/>
</dbReference>
<dbReference type="GO" id="GO:0061629">
    <property type="term" value="F:RNA polymerase II-specific DNA-binding transcription factor binding"/>
    <property type="evidence" value="ECO:0000353"/>
    <property type="project" value="BHF-UCL"/>
</dbReference>
<dbReference type="GO" id="GO:1990837">
    <property type="term" value="F:sequence-specific double-stranded DNA binding"/>
    <property type="evidence" value="ECO:0000314"/>
    <property type="project" value="ARUK-UCL"/>
</dbReference>
<dbReference type="GO" id="GO:0000976">
    <property type="term" value="F:transcription cis-regulatory region binding"/>
    <property type="evidence" value="ECO:0000250"/>
    <property type="project" value="BHF-UCL"/>
</dbReference>
<dbReference type="GO" id="GO:0098990">
    <property type="term" value="P:AMPA selective glutamate receptor signaling pathway"/>
    <property type="evidence" value="ECO:0000250"/>
    <property type="project" value="Alzheimers_University_of_Toronto"/>
</dbReference>
<dbReference type="GO" id="GO:0006915">
    <property type="term" value="P:apoptotic process"/>
    <property type="evidence" value="ECO:0007669"/>
    <property type="project" value="UniProtKB-KW"/>
</dbReference>
<dbReference type="GO" id="GO:0001782">
    <property type="term" value="P:B cell homeostasis"/>
    <property type="evidence" value="ECO:0000250"/>
    <property type="project" value="UniProtKB"/>
</dbReference>
<dbReference type="GO" id="GO:0042100">
    <property type="term" value="P:B cell proliferation"/>
    <property type="evidence" value="ECO:0000250"/>
    <property type="project" value="UniProtKB"/>
</dbReference>
<dbReference type="GO" id="GO:0050853">
    <property type="term" value="P:B cell receptor signaling pathway"/>
    <property type="evidence" value="ECO:0000250"/>
    <property type="project" value="UniProtKB"/>
</dbReference>
<dbReference type="GO" id="GO:0001568">
    <property type="term" value="P:blood vessel development"/>
    <property type="evidence" value="ECO:0000250"/>
    <property type="project" value="UniProtKB"/>
</dbReference>
<dbReference type="GO" id="GO:0001974">
    <property type="term" value="P:blood vessel remodeling"/>
    <property type="evidence" value="ECO:0000250"/>
    <property type="project" value="UniProtKB"/>
</dbReference>
<dbReference type="GO" id="GO:0003211">
    <property type="term" value="P:cardiac ventricle formation"/>
    <property type="evidence" value="ECO:0000250"/>
    <property type="project" value="UniProtKB"/>
</dbReference>
<dbReference type="GO" id="GO:0030154">
    <property type="term" value="P:cell differentiation"/>
    <property type="evidence" value="ECO:0000318"/>
    <property type="project" value="GO_Central"/>
</dbReference>
<dbReference type="GO" id="GO:0048667">
    <property type="term" value="P:cell morphogenesis involved in neuron differentiation"/>
    <property type="evidence" value="ECO:0000250"/>
    <property type="project" value="Alzheimers_University_of_Toronto"/>
</dbReference>
<dbReference type="GO" id="GO:0071277">
    <property type="term" value="P:cellular response to calcium ion"/>
    <property type="evidence" value="ECO:0000250"/>
    <property type="project" value="UniProtKB"/>
</dbReference>
<dbReference type="GO" id="GO:0071498">
    <property type="term" value="P:cellular response to fluid shear stress"/>
    <property type="evidence" value="ECO:0000250"/>
    <property type="project" value="UniProtKB"/>
</dbReference>
<dbReference type="GO" id="GO:0071222">
    <property type="term" value="P:cellular response to lipopolysaccharide"/>
    <property type="evidence" value="ECO:0000250"/>
    <property type="project" value="UniProtKB"/>
</dbReference>
<dbReference type="GO" id="GO:0071374">
    <property type="term" value="P:cellular response to parathyroid hormone stimulus"/>
    <property type="evidence" value="ECO:0000314"/>
    <property type="project" value="UniProtKB"/>
</dbReference>
<dbReference type="GO" id="GO:0071560">
    <property type="term" value="P:cellular response to transforming growth factor beta stimulus"/>
    <property type="evidence" value="ECO:0000314"/>
    <property type="project" value="UniProtKB"/>
</dbReference>
<dbReference type="GO" id="GO:0035984">
    <property type="term" value="P:cellular response to trichostatin A"/>
    <property type="evidence" value="ECO:0000250"/>
    <property type="project" value="UniProtKB"/>
</dbReference>
<dbReference type="GO" id="GO:0071466">
    <property type="term" value="P:cellular response to xenobiotic stimulus"/>
    <property type="evidence" value="ECO:0000250"/>
    <property type="project" value="UniProtKB"/>
</dbReference>
<dbReference type="GO" id="GO:0002062">
    <property type="term" value="P:chondrocyte differentiation"/>
    <property type="evidence" value="ECO:0000250"/>
    <property type="project" value="UniProtKB"/>
</dbReference>
<dbReference type="GO" id="GO:0001958">
    <property type="term" value="P:endochondral ossification"/>
    <property type="evidence" value="ECO:0000250"/>
    <property type="project" value="UniProtKB"/>
</dbReference>
<dbReference type="GO" id="GO:2001013">
    <property type="term" value="P:epithelial cell proliferation involved in renal tubule morphogenesis"/>
    <property type="evidence" value="ECO:0000250"/>
    <property type="project" value="UniProtKB"/>
</dbReference>
<dbReference type="GO" id="GO:0060079">
    <property type="term" value="P:excitatory postsynaptic potential"/>
    <property type="evidence" value="ECO:0000250"/>
    <property type="project" value="Alzheimers_University_of_Toronto"/>
</dbReference>
<dbReference type="GO" id="GO:0002467">
    <property type="term" value="P:germinal center formation"/>
    <property type="evidence" value="ECO:0000250"/>
    <property type="project" value="UniProtKB"/>
</dbReference>
<dbReference type="GO" id="GO:0072102">
    <property type="term" value="P:glomerulus morphogenesis"/>
    <property type="evidence" value="ECO:0000250"/>
    <property type="project" value="UniProtKB"/>
</dbReference>
<dbReference type="GO" id="GO:0007507">
    <property type="term" value="P:heart development"/>
    <property type="evidence" value="ECO:0000270"/>
    <property type="project" value="UniProtKB"/>
</dbReference>
<dbReference type="GO" id="GO:0001947">
    <property type="term" value="P:heart looping"/>
    <property type="evidence" value="ECO:0000250"/>
    <property type="project" value="UniProtKB"/>
</dbReference>
<dbReference type="GO" id="GO:0006959">
    <property type="term" value="P:humoral immune response"/>
    <property type="evidence" value="ECO:0000250"/>
    <property type="project" value="UniProtKB"/>
</dbReference>
<dbReference type="GO" id="GO:0007611">
    <property type="term" value="P:learning or memory"/>
    <property type="evidence" value="ECO:0000250"/>
    <property type="project" value="UniProtKB"/>
</dbReference>
<dbReference type="GO" id="GO:0000165">
    <property type="term" value="P:MAPK cascade"/>
    <property type="evidence" value="ECO:0000314"/>
    <property type="project" value="UniProtKB"/>
</dbReference>
<dbReference type="GO" id="GO:0030318">
    <property type="term" value="P:melanocyte differentiation"/>
    <property type="evidence" value="ECO:0000250"/>
    <property type="project" value="UniProtKB"/>
</dbReference>
<dbReference type="GO" id="GO:0007521">
    <property type="term" value="P:muscle cell fate determination"/>
    <property type="evidence" value="ECO:0000250"/>
    <property type="project" value="UniProtKB"/>
</dbReference>
<dbReference type="GO" id="GO:0007517">
    <property type="term" value="P:muscle organ development"/>
    <property type="evidence" value="ECO:0000304"/>
    <property type="project" value="ProtInc"/>
</dbReference>
<dbReference type="GO" id="GO:0014902">
    <property type="term" value="P:myotube differentiation"/>
    <property type="evidence" value="ECO:0000270"/>
    <property type="project" value="UniProtKB"/>
</dbReference>
<dbReference type="GO" id="GO:0043537">
    <property type="term" value="P:negative regulation of blood vessel endothelial cell migration"/>
    <property type="evidence" value="ECO:0000316"/>
    <property type="project" value="BHF-UCL"/>
</dbReference>
<dbReference type="GO" id="GO:0010629">
    <property type="term" value="P:negative regulation of gene expression"/>
    <property type="evidence" value="ECO:0000250"/>
    <property type="project" value="UniProtKB"/>
</dbReference>
<dbReference type="GO" id="GO:0043524">
    <property type="term" value="P:negative regulation of neuron apoptotic process"/>
    <property type="evidence" value="ECO:0000250"/>
    <property type="project" value="UniProtKB"/>
</dbReference>
<dbReference type="GO" id="GO:0030279">
    <property type="term" value="P:negative regulation of ossification"/>
    <property type="evidence" value="ECO:0000314"/>
    <property type="project" value="UniProtKB"/>
</dbReference>
<dbReference type="GO" id="GO:0000122">
    <property type="term" value="P:negative regulation of transcription by RNA polymerase II"/>
    <property type="evidence" value="ECO:0000315"/>
    <property type="project" value="BHF-UCL"/>
</dbReference>
<dbReference type="GO" id="GO:1904753">
    <property type="term" value="P:negative regulation of vascular associated smooth muscle cell migration"/>
    <property type="evidence" value="ECO:0000314"/>
    <property type="project" value="BHF-UCL"/>
</dbReference>
<dbReference type="GO" id="GO:1904706">
    <property type="term" value="P:negative regulation of vascular associated smooth muscle cell proliferation"/>
    <property type="evidence" value="ECO:0000314"/>
    <property type="project" value="BHF-UCL"/>
</dbReference>
<dbReference type="GO" id="GO:1905563">
    <property type="term" value="P:negative regulation of vascular endothelial cell proliferation"/>
    <property type="evidence" value="ECO:0000316"/>
    <property type="project" value="BHF-UCL"/>
</dbReference>
<dbReference type="GO" id="GO:0072160">
    <property type="term" value="P:nephron tubule epithelial cell differentiation"/>
    <property type="evidence" value="ECO:0000250"/>
    <property type="project" value="UniProtKB"/>
</dbReference>
<dbReference type="GO" id="GO:0007399">
    <property type="term" value="P:nervous system development"/>
    <property type="evidence" value="ECO:0000304"/>
    <property type="project" value="ProtInc"/>
</dbReference>
<dbReference type="GO" id="GO:0014033">
    <property type="term" value="P:neural crest cell differentiation"/>
    <property type="evidence" value="ECO:0000250"/>
    <property type="project" value="UniProtKB"/>
</dbReference>
<dbReference type="GO" id="GO:0048666">
    <property type="term" value="P:neuron development"/>
    <property type="evidence" value="ECO:0000250"/>
    <property type="project" value="UniProtKB"/>
</dbReference>
<dbReference type="GO" id="GO:0030182">
    <property type="term" value="P:neuron differentiation"/>
    <property type="evidence" value="ECO:0000270"/>
    <property type="project" value="UniProtKB"/>
</dbReference>
<dbReference type="GO" id="GO:0001764">
    <property type="term" value="P:neuron migration"/>
    <property type="evidence" value="ECO:0000250"/>
    <property type="project" value="Alzheimers_University_of_Toronto"/>
</dbReference>
<dbReference type="GO" id="GO:0098989">
    <property type="term" value="P:NMDA selective glutamate receptor signaling pathway"/>
    <property type="evidence" value="ECO:0000250"/>
    <property type="project" value="Alzheimers_University_of_Toronto"/>
</dbReference>
<dbReference type="GO" id="GO:0001649">
    <property type="term" value="P:osteoblast differentiation"/>
    <property type="evidence" value="ECO:0000250"/>
    <property type="project" value="UniProtKB"/>
</dbReference>
<dbReference type="GO" id="GO:0003151">
    <property type="term" value="P:outflow tract morphogenesis"/>
    <property type="evidence" value="ECO:0000250"/>
    <property type="project" value="UniProtKB"/>
</dbReference>
<dbReference type="GO" id="GO:0030220">
    <property type="term" value="P:platelet formation"/>
    <property type="evidence" value="ECO:0000250"/>
    <property type="project" value="UniProtKB"/>
</dbReference>
<dbReference type="GO" id="GO:0030890">
    <property type="term" value="P:positive regulation of B cell proliferation"/>
    <property type="evidence" value="ECO:0000250"/>
    <property type="project" value="UniProtKB"/>
</dbReference>
<dbReference type="GO" id="GO:2000987">
    <property type="term" value="P:positive regulation of behavioral fear response"/>
    <property type="evidence" value="ECO:0000250"/>
    <property type="project" value="UniProtKB"/>
</dbReference>
<dbReference type="GO" id="GO:0030501">
    <property type="term" value="P:positive regulation of bone mineralization"/>
    <property type="evidence" value="ECO:0000250"/>
    <property type="project" value="UniProtKB"/>
</dbReference>
<dbReference type="GO" id="GO:2000727">
    <property type="term" value="P:positive regulation of cardiac muscle cell differentiation"/>
    <property type="evidence" value="ECO:0000314"/>
    <property type="project" value="UniProtKB"/>
</dbReference>
<dbReference type="GO" id="GO:0060045">
    <property type="term" value="P:positive regulation of cardiac muscle cell proliferation"/>
    <property type="evidence" value="ECO:0000250"/>
    <property type="project" value="UniProtKB"/>
</dbReference>
<dbReference type="GO" id="GO:0045893">
    <property type="term" value="P:positive regulation of DNA-templated transcription"/>
    <property type="evidence" value="ECO:0000314"/>
    <property type="project" value="UniProtKB"/>
</dbReference>
<dbReference type="GO" id="GO:0010628">
    <property type="term" value="P:positive regulation of gene expression"/>
    <property type="evidence" value="ECO:0000314"/>
    <property type="project" value="UniProtKB"/>
</dbReference>
<dbReference type="GO" id="GO:2000111">
    <property type="term" value="P:positive regulation of macrophage apoptotic process"/>
    <property type="evidence" value="ECO:0000250"/>
    <property type="project" value="UniProtKB"/>
</dbReference>
<dbReference type="GO" id="GO:0043410">
    <property type="term" value="P:positive regulation of MAPK cascade"/>
    <property type="evidence" value="ECO:0000250"/>
    <property type="project" value="Alzheimers_University_of_Toronto"/>
</dbReference>
<dbReference type="GO" id="GO:0045663">
    <property type="term" value="P:positive regulation of myoblast differentiation"/>
    <property type="evidence" value="ECO:0000315"/>
    <property type="project" value="UniProtKB"/>
</dbReference>
<dbReference type="GO" id="GO:0045666">
    <property type="term" value="P:positive regulation of neuron differentiation"/>
    <property type="evidence" value="ECO:0000250"/>
    <property type="project" value="UniProtKB"/>
</dbReference>
<dbReference type="GO" id="GO:0045669">
    <property type="term" value="P:positive regulation of osteoblast differentiation"/>
    <property type="evidence" value="ECO:0000250"/>
    <property type="project" value="UniProtKB"/>
</dbReference>
<dbReference type="GO" id="GO:2001016">
    <property type="term" value="P:positive regulation of skeletal muscle cell differentiation"/>
    <property type="evidence" value="ECO:0000314"/>
    <property type="project" value="UniProtKB"/>
</dbReference>
<dbReference type="GO" id="GO:0048643">
    <property type="term" value="P:positive regulation of skeletal muscle tissue development"/>
    <property type="evidence" value="ECO:0000315"/>
    <property type="project" value="UniProtKB"/>
</dbReference>
<dbReference type="GO" id="GO:0045944">
    <property type="term" value="P:positive regulation of transcription by RNA polymerase II"/>
    <property type="evidence" value="ECO:0000314"/>
    <property type="project" value="UniProtKB"/>
</dbReference>
<dbReference type="GO" id="GO:0003138">
    <property type="term" value="P:primary heart field specification"/>
    <property type="evidence" value="ECO:0000250"/>
    <property type="project" value="UniProtKB"/>
</dbReference>
<dbReference type="GO" id="GO:0060998">
    <property type="term" value="P:regulation of dendritic spine development"/>
    <property type="evidence" value="ECO:0000250"/>
    <property type="project" value="Alzheimers_University_of_Toronto"/>
</dbReference>
<dbReference type="GO" id="GO:0006355">
    <property type="term" value="P:regulation of DNA-templated transcription"/>
    <property type="evidence" value="ECO:0000314"/>
    <property type="project" value="Alzheimers_University_of_Toronto"/>
</dbReference>
<dbReference type="GO" id="GO:0002634">
    <property type="term" value="P:regulation of germinal center formation"/>
    <property type="evidence" value="ECO:0000250"/>
    <property type="project" value="UniProtKB"/>
</dbReference>
<dbReference type="GO" id="GO:0045652">
    <property type="term" value="P:regulation of megakaryocyte differentiation"/>
    <property type="evidence" value="ECO:0000250"/>
    <property type="project" value="UniProtKB"/>
</dbReference>
<dbReference type="GO" id="GO:0043523">
    <property type="term" value="P:regulation of neuron apoptotic process"/>
    <property type="evidence" value="ECO:0000250"/>
    <property type="project" value="Alzheimers_University_of_Toronto"/>
</dbReference>
<dbReference type="GO" id="GO:0046928">
    <property type="term" value="P:regulation of neurotransmitter secretion"/>
    <property type="evidence" value="ECO:0000250"/>
    <property type="project" value="Alzheimers_University_of_Toronto"/>
</dbReference>
<dbReference type="GO" id="GO:0051963">
    <property type="term" value="P:regulation of synapse assembly"/>
    <property type="evidence" value="ECO:0000250"/>
    <property type="project" value="Alzheimers_University_of_Toronto"/>
</dbReference>
<dbReference type="GO" id="GO:0060025">
    <property type="term" value="P:regulation of synaptic activity"/>
    <property type="evidence" value="ECO:0000250"/>
    <property type="project" value="UniProtKB"/>
</dbReference>
<dbReference type="GO" id="GO:0048167">
    <property type="term" value="P:regulation of synaptic plasticity"/>
    <property type="evidence" value="ECO:0000250"/>
    <property type="project" value="Alzheimers_University_of_Toronto"/>
</dbReference>
<dbReference type="GO" id="GO:0051966">
    <property type="term" value="P:regulation of synaptic transmission, glutamatergic"/>
    <property type="evidence" value="ECO:0000250"/>
    <property type="project" value="Alzheimers_University_of_Toronto"/>
</dbReference>
<dbReference type="GO" id="GO:0061333">
    <property type="term" value="P:renal tubule morphogenesis"/>
    <property type="evidence" value="ECO:0000250"/>
    <property type="project" value="UniProtKB"/>
</dbReference>
<dbReference type="GO" id="GO:0002931">
    <property type="term" value="P:response to ischemia"/>
    <property type="evidence" value="ECO:0000250"/>
    <property type="project" value="Alzheimers_University_of_Toronto"/>
</dbReference>
<dbReference type="GO" id="GO:0003139">
    <property type="term" value="P:secondary heart field specification"/>
    <property type="evidence" value="ECO:0000250"/>
    <property type="project" value="UniProtKB"/>
</dbReference>
<dbReference type="GO" id="GO:0003185">
    <property type="term" value="P:sinoatrial valve morphogenesis"/>
    <property type="evidence" value="ECO:0000250"/>
    <property type="project" value="UniProtKB"/>
</dbReference>
<dbReference type="GO" id="GO:0007519">
    <property type="term" value="P:skeletal muscle tissue development"/>
    <property type="evidence" value="ECO:0000250"/>
    <property type="project" value="UniProtKB"/>
</dbReference>
<dbReference type="GO" id="GO:0051145">
    <property type="term" value="P:smooth muscle cell differentiation"/>
    <property type="evidence" value="ECO:0000250"/>
    <property type="project" value="UniProtKB"/>
</dbReference>
<dbReference type="GO" id="GO:0055012">
    <property type="term" value="P:ventricular cardiac muscle cell differentiation"/>
    <property type="evidence" value="ECO:0000250"/>
    <property type="project" value="UniProtKB"/>
</dbReference>
<dbReference type="CDD" id="cd00265">
    <property type="entry name" value="MADS_MEF2_like"/>
    <property type="match status" value="1"/>
</dbReference>
<dbReference type="FunFam" id="3.40.1810.10:FF:000001">
    <property type="entry name" value="Myocyte-specific enhancer factor 2A homolog"/>
    <property type="match status" value="1"/>
</dbReference>
<dbReference type="Gene3D" id="3.40.1810.10">
    <property type="entry name" value="Transcription factor, MADS-box"/>
    <property type="match status" value="1"/>
</dbReference>
<dbReference type="InterPro" id="IPR022102">
    <property type="entry name" value="HJURP_C"/>
</dbReference>
<dbReference type="InterPro" id="IPR033896">
    <property type="entry name" value="MEF2-like_N"/>
</dbReference>
<dbReference type="InterPro" id="IPR002100">
    <property type="entry name" value="TF_MADSbox"/>
</dbReference>
<dbReference type="InterPro" id="IPR036879">
    <property type="entry name" value="TF_MADSbox_sf"/>
</dbReference>
<dbReference type="PANTHER" id="PTHR11945">
    <property type="entry name" value="MADS BOX PROTEIN"/>
    <property type="match status" value="1"/>
</dbReference>
<dbReference type="PANTHER" id="PTHR11945:SF534">
    <property type="entry name" value="MYOCYTE-SPECIFIC ENHANCER FACTOR 2"/>
    <property type="match status" value="1"/>
</dbReference>
<dbReference type="Pfam" id="PF12347">
    <property type="entry name" value="HJURP_C"/>
    <property type="match status" value="1"/>
</dbReference>
<dbReference type="Pfam" id="PF00319">
    <property type="entry name" value="SRF-TF"/>
    <property type="match status" value="1"/>
</dbReference>
<dbReference type="PRINTS" id="PR00404">
    <property type="entry name" value="MADSDOMAIN"/>
</dbReference>
<dbReference type="SMART" id="SM00432">
    <property type="entry name" value="MADS"/>
    <property type="match status" value="1"/>
</dbReference>
<dbReference type="SUPFAM" id="SSF55455">
    <property type="entry name" value="SRF-like"/>
    <property type="match status" value="1"/>
</dbReference>
<dbReference type="PROSITE" id="PS00350">
    <property type="entry name" value="MADS_BOX_1"/>
    <property type="match status" value="1"/>
</dbReference>
<dbReference type="PROSITE" id="PS50066">
    <property type="entry name" value="MADS_BOX_2"/>
    <property type="match status" value="1"/>
</dbReference>
<comment type="function">
    <text evidence="3 10 11 14 15 21 22">Transcription activator which binds specifically to the MEF2 element present in the regulatory regions of many muscle-specific genes. Controls cardiac morphogenesis and myogenesis, and is also involved in vascular development. Enhances transcriptional activation mediated by SOX18. Plays an essential role in hippocampal-dependent learning and memory by suppressing the number of excitatory synapses and thus regulating basal and evoked synaptic transmission. Crucial for normal neuronal development, distribution, and electrical activity in the neocortex. Necessary for proper development of megakaryocytes and platelets and for bone marrow B-lymphopoiesis. Required for B-cell survival and proliferation in response to BCR stimulation, efficient IgG1 antibody responses to T-cell-dependent antigens and for normal induction of germinal center B-cells. May also be involved in neurogenesis and in the development of cortical architecture (By similarity). Isoforms that lack the repressor domain are more active than isoform 1.</text>
</comment>
<comment type="subunit">
    <text evidence="3 7 9 16">Forms a complex with class II HDACs in undifferentiating cells. On myogenic differentiation, HDACs are released into the cytoplasm allowing MEF2s to interact with other proteins for activation. Interacts with EP300 in differentiating cells; the interaction acetylates MEF2C leading to increased DNA binding and activation (By similarity). Interacts with HDAC7 and CARM1 (By similarity). Interacts with HDAC4 and HDAC9; the interaction with HDACs represses transcriptional activity (PubMed:10523670, PubMed:11535832). Interacts with LPIN1. Interacts with MYOCD. Interacts with AKAP13 (By similarity). Interacts with FOXK1; the interaction inhibits MEF2C transactivation activity (By similarity). Interacts (via N-terminus) with HABP4; this interaction decreases DNA-binding activity of MEF2C in myocardial cells in response to mechanical stress (PubMed:15862299). Interacts with JPH2; interaction specifically takes place with the Junctophilin-2 N-terminal fragment cleavage product of JPH2 (By similarity). Interacts (via MADS box) with SOX18 (By similarity). Interacts with PHF7; the interaction promotes MEF2C binding to its transcription targets (By similarity).</text>
</comment>
<comment type="interaction">
    <interactant intactId="EBI-2684075">
        <id>Q06413</id>
    </interactant>
    <interactant intactId="EBI-1038838">
        <id>Q13936</id>
        <label>CACNA1C</label>
    </interactant>
    <organismsDiffer>false</organismsDiffer>
    <experiments>4</experiments>
</comment>
<comment type="interaction">
    <interactant intactId="EBI-2684075">
        <id>Q06413</id>
    </interactant>
    <interactant intactId="EBI-11953488">
        <id>P56524-2</id>
        <label>HDAC4</label>
    </interactant>
    <organismsDiffer>false</organismsDiffer>
    <experiments>5</experiments>
</comment>
<comment type="interaction">
    <interactant intactId="EBI-2684075">
        <id>Q06413</id>
    </interactant>
    <interactant intactId="EBI-715576">
        <id>Q9UQL6</id>
        <label>HDAC5</label>
    </interactant>
    <organismsDiffer>false</organismsDiffer>
    <experiments>3</experiments>
</comment>
<comment type="interaction">
    <interactant intactId="EBI-2684075">
        <id>Q06413</id>
    </interactant>
    <interactant intactId="EBI-765444">
        <id>Q9UKV0</id>
        <label>HDAC9</label>
    </interactant>
    <organismsDiffer>false</organismsDiffer>
    <experiments>3</experiments>
</comment>
<comment type="interaction">
    <interactant intactId="EBI-2684075">
        <id>Q06413</id>
    </interactant>
    <interactant intactId="EBI-356910">
        <id>Q9H1R3</id>
        <label>MYLK2</label>
    </interactant>
    <organismsDiffer>false</organismsDiffer>
    <experiments>2</experiments>
</comment>
<comment type="interaction">
    <interactant intactId="EBI-2684075">
        <id>Q06413</id>
    </interactant>
    <interactant intactId="EBI-954357">
        <id>Q05086</id>
        <label>UBE3A</label>
    </interactant>
    <organismsDiffer>false</organismsDiffer>
    <experiments>3</experiments>
</comment>
<comment type="subcellular location">
    <subcellularLocation>
        <location evidence="2">Nucleus</location>
    </subcellularLocation>
    <subcellularLocation>
        <location evidence="2">Cytoplasm</location>
        <location evidence="2">Sarcoplasm</location>
    </subcellularLocation>
</comment>
<comment type="alternative products">
    <event type="alternative splicing"/>
    <isoform>
        <id>Q06413-1</id>
        <name>1</name>
        <sequence type="displayed"/>
    </isoform>
    <isoform>
        <id>Q06413-2</id>
        <name>2</name>
        <name>Muscle</name>
        <sequence type="described" ref="VSP_006248"/>
    </isoform>
    <isoform>
        <id>Q06413-3</id>
        <name>3</name>
        <name>hMEF2C-delta32</name>
        <name>Brain</name>
        <sequence type="described" ref="VSP_006249"/>
    </isoform>
    <isoform>
        <id>Q06413-4</id>
        <name>4</name>
        <sequence type="described" ref="VSP_043339 VSP_006248"/>
    </isoform>
    <isoform>
        <id>Q06413-5</id>
        <name>5</name>
        <sequence type="described" ref="VSP_045478 VSP_006248"/>
    </isoform>
    <isoform>
        <id>Q06413-6</id>
        <name>6</name>
        <sequence type="described" ref="VSP_046251 VSP_006248"/>
    </isoform>
    <text>Additional isoforms seem to exist.</text>
</comment>
<comment type="tissue specificity">
    <text evidence="23">Expressed in brain and skeletal muscle.</text>
</comment>
<comment type="developmental stage">
    <text>Expression is highest during the early stages of postnatal development, at later stages levels greatly decrease.</text>
</comment>
<comment type="domain">
    <text evidence="1">The beta domain, missing in a number of isoforms, is required for enhancement of transcriptional activity.</text>
</comment>
<comment type="PTM">
    <text evidence="1 8 11 12 13 17 21 22">Phosphorylation on Ser-59 enhances DNA binding activity (By similarity). Phosphorylation on Ser-396 is required for Lys-391 sumoylation and inhibits transcriptional activity.</text>
</comment>
<comment type="PTM">
    <text evidence="1">Acetylated by p300 on several sites in diffentiating myocytes. Acetylation on Lys-4 increases DNA binding and transactivation (By similarity).</text>
</comment>
<comment type="PTM">
    <text evidence="12 13 17">Sumoylated on Lys-391 with SUMO2 but not by SUMO1 represses transcriptional activity.</text>
</comment>
<comment type="PTM">
    <text evidence="10">Proteolytically cleaved in cerebellar granule neurons, probably by caspase 7, following neurotoxicity. Preferentially cleaves the CDK5-mediated hyperphosphorylated form which leads to neuron apoptosis and transcriptional inactivation.</text>
</comment>
<comment type="disease" evidence="18">
    <disease id="DI-02856">
        <name>Neurodevelopmental disorder with hypotonia, stereotypic hand movements, and impaired language</name>
        <acronym>NEDHSIL</acronym>
        <description>An autosomal dominant disorder characterized by impaired intellectual development, absent speech, hypotonia, poor eye contact and stereotypic movements. Dysmorphic features include high broad forehead with variable small chin, short nose with anteverted nares, large open mouth, upslanted palpebral fissures and prominent eyebrows. Some patients have seizures.</description>
        <dbReference type="MIM" id="613443"/>
    </disease>
    <text>The disease is caused by variants affecting the gene represented in this entry.</text>
</comment>
<comment type="similarity">
    <text evidence="28">Belongs to the MEF2 family.</text>
</comment>
<keyword id="KW-0007">Acetylation</keyword>
<keyword id="KW-0010">Activator</keyword>
<keyword id="KW-0025">Alternative splicing</keyword>
<keyword id="KW-0053">Apoptosis</keyword>
<keyword id="KW-0963">Cytoplasm</keyword>
<keyword id="KW-0217">Developmental protein</keyword>
<keyword id="KW-0221">Differentiation</keyword>
<keyword id="KW-0225">Disease variant</keyword>
<keyword id="KW-0238">DNA-binding</keyword>
<keyword id="KW-0887">Epilepsy</keyword>
<keyword id="KW-0991">Intellectual disability</keyword>
<keyword id="KW-1017">Isopeptide bond</keyword>
<keyword id="KW-0524">Neurogenesis</keyword>
<keyword id="KW-0539">Nucleus</keyword>
<keyword id="KW-0597">Phosphoprotein</keyword>
<keyword id="KW-1267">Proteomics identification</keyword>
<keyword id="KW-1185">Reference proteome</keyword>
<keyword id="KW-0804">Transcription</keyword>
<keyword id="KW-0805">Transcription regulation</keyword>
<keyword id="KW-0832">Ubl conjugation</keyword>
<name>MEF2C_HUMAN</name>
<gene>
    <name evidence="29" type="primary">MEF2C</name>
</gene>
<evidence type="ECO:0000250" key="1"/>
<evidence type="ECO:0000250" key="2">
    <source>
        <dbReference type="UniProtKB" id="A0A096MJY4"/>
    </source>
</evidence>
<evidence type="ECO:0000250" key="3">
    <source>
        <dbReference type="UniProtKB" id="Q8CFN5"/>
    </source>
</evidence>
<evidence type="ECO:0000255" key="4"/>
<evidence type="ECO:0000255" key="5">
    <source>
        <dbReference type="PROSITE-ProRule" id="PRU00251"/>
    </source>
</evidence>
<evidence type="ECO:0000256" key="6">
    <source>
        <dbReference type="SAM" id="MobiDB-lite"/>
    </source>
</evidence>
<evidence type="ECO:0000269" key="7">
    <source>
    </source>
</evidence>
<evidence type="ECO:0000269" key="8">
    <source>
    </source>
</evidence>
<evidence type="ECO:0000269" key="9">
    <source>
    </source>
</evidence>
<evidence type="ECO:0000269" key="10">
    <source>
    </source>
</evidence>
<evidence type="ECO:0000269" key="11">
    <source>
    </source>
</evidence>
<evidence type="ECO:0000269" key="12">
    <source>
    </source>
</evidence>
<evidence type="ECO:0000269" key="13">
    <source>
    </source>
</evidence>
<evidence type="ECO:0000269" key="14">
    <source>
    </source>
</evidence>
<evidence type="ECO:0000269" key="15">
    <source>
    </source>
</evidence>
<evidence type="ECO:0000269" key="16">
    <source>
    </source>
</evidence>
<evidence type="ECO:0000269" key="17">
    <source>
    </source>
</evidence>
<evidence type="ECO:0000269" key="18">
    <source>
    </source>
</evidence>
<evidence type="ECO:0000269" key="19">
    <source>
    </source>
</evidence>
<evidence type="ECO:0000269" key="20">
    <source>
    </source>
</evidence>
<evidence type="ECO:0000269" key="21">
    <source>
    </source>
</evidence>
<evidence type="ECO:0000269" key="22">
    <source>
    </source>
</evidence>
<evidence type="ECO:0000269" key="23">
    <source>
    </source>
</evidence>
<evidence type="ECO:0000303" key="24">
    <source>
    </source>
</evidence>
<evidence type="ECO:0000303" key="25">
    <source>
    </source>
</evidence>
<evidence type="ECO:0000303" key="26">
    <source>
    </source>
</evidence>
<evidence type="ECO:0000303" key="27">
    <source ref="3"/>
</evidence>
<evidence type="ECO:0000305" key="28"/>
<evidence type="ECO:0000312" key="29">
    <source>
        <dbReference type="HGNC" id="HGNC:6996"/>
    </source>
</evidence>
<evidence type="ECO:0007744" key="30">
    <source>
    </source>
</evidence>
<sequence>MGRKKIQITRIMDERNRQVTFTKRKFGLMKKAYELSVLCDCEIALIIFNSTNKLFQYASTDMDKVLLKYTEYNEPHESRTNSDIVETLRKKGLNGCDSPDPDADDSVGHSPESEDKYRKINEDIDLMISRQRLCAVPPPNFEMPVSIPVSSHNSLVYSNPVSSLGNPNLLPLAHPSLQRNSMSPGVTHRPPSAGNTGGLMGGDLTSGAGTSAGNGYGNPRNSPGLLVSPGNLNKNMQAKSPPPMNLGMNNRKPDLRVLIPPGSKNTMPSVSEDVDLLLNQRINNSQSAQSLATPVVSVATPTLPGQGMGGYPSAISTTYGTEYSLSSADLSSLSGFNTASALHLGSVTGWQQQHLHNMPPSALSQLGACTSTHLSQSSNLSLPSTQSLNIKSEPVSPPRDRTTTPSRYPQHTRHEAGRSPVDSLSSCSSSYDGSDREDHRNEFHSPIGLTRPSPDERESPSVKRMRLSEGWAT</sequence>
<feature type="chain" id="PRO_0000199433" description="Myocyte-specific enhancer factor 2C">
    <location>
        <begin position="1"/>
        <end position="473"/>
    </location>
</feature>
<feature type="domain" description="MADS-box" evidence="5">
    <location>
        <begin position="3"/>
        <end position="57"/>
    </location>
</feature>
<feature type="DNA-binding region" description="Mef2-type" evidence="4">
    <location>
        <begin position="58"/>
        <end position="86"/>
    </location>
</feature>
<feature type="region of interest" description="Disordered" evidence="6">
    <location>
        <begin position="91"/>
        <end position="116"/>
    </location>
</feature>
<feature type="region of interest" description="Disordered" evidence="6">
    <location>
        <begin position="180"/>
        <end position="224"/>
    </location>
</feature>
<feature type="region of interest" description="Beta domain">
    <location>
        <begin position="271"/>
        <end position="278"/>
    </location>
</feature>
<feature type="region of interest" description="Transcription repressor">
    <location>
        <begin position="368"/>
        <end position="399"/>
    </location>
</feature>
<feature type="region of interest" description="Disordered" evidence="6">
    <location>
        <begin position="375"/>
        <end position="473"/>
    </location>
</feature>
<feature type="compositionally biased region" description="Polar residues" evidence="6">
    <location>
        <begin position="375"/>
        <end position="390"/>
    </location>
</feature>
<feature type="compositionally biased region" description="Low complexity" evidence="6">
    <location>
        <begin position="419"/>
        <end position="432"/>
    </location>
</feature>
<feature type="compositionally biased region" description="Basic and acidic residues" evidence="6">
    <location>
        <begin position="433"/>
        <end position="443"/>
    </location>
</feature>
<feature type="site" description="Cleavage" evidence="28">
    <location>
        <begin position="432"/>
        <end position="433"/>
    </location>
</feature>
<feature type="modified residue" description="N6-acetyllysine" evidence="3">
    <location>
        <position position="4"/>
    </location>
</feature>
<feature type="modified residue" description="Phosphoserine; by CK2" evidence="3">
    <location>
        <position position="59"/>
    </location>
</feature>
<feature type="modified residue" description="Phosphoserine" evidence="3">
    <location>
        <position position="98"/>
    </location>
</feature>
<feature type="modified residue" description="Phosphoserine" evidence="3">
    <location>
        <position position="106"/>
    </location>
</feature>
<feature type="modified residue" description="Phosphoserine" evidence="3">
    <location>
        <position position="110"/>
    </location>
</feature>
<feature type="modified residue" description="N6-acetyllysine" evidence="14">
    <location>
        <position position="116"/>
    </location>
</feature>
<feature type="modified residue" description="N6-acetyllysine" evidence="14">
    <location>
        <position position="119"/>
    </location>
</feature>
<feature type="modified residue" description="Phosphoserine" evidence="30">
    <location>
        <position position="222"/>
    </location>
</feature>
<feature type="modified residue" description="Phosphoserine" evidence="30">
    <location>
        <position position="228"/>
    </location>
</feature>
<feature type="modified residue" description="N6-acetyllysine" evidence="14">
    <location>
        <position position="234"/>
    </location>
</feature>
<feature type="modified residue" description="N6-acetyllysine" evidence="14">
    <location>
        <position position="239"/>
    </location>
</feature>
<feature type="modified residue" description="Phosphoserine" evidence="30">
    <location>
        <position position="240"/>
    </location>
</feature>
<feature type="modified residue" description="N6-acetyllysine" evidence="14">
    <location>
        <position position="252"/>
    </location>
</feature>
<feature type="modified residue" description="N6-acetyllysine" evidence="14">
    <location>
        <position position="264"/>
    </location>
</feature>
<feature type="modified residue" description="Phosphothreonine; by MAPK14" evidence="21 22">
    <location>
        <position position="293"/>
    </location>
</feature>
<feature type="modified residue" description="Phosphothreonine; by MAPK14" evidence="21 22">
    <location>
        <position position="300"/>
    </location>
</feature>
<feature type="modified residue" description="Phosphoserine; by CDK5" evidence="11">
    <location>
        <position position="396"/>
    </location>
</feature>
<feature type="modified residue" description="Phosphoserine; by MAPK7" evidence="21 22">
    <location>
        <position position="419"/>
    </location>
</feature>
<feature type="modified residue" description="Phosphoserine" evidence="30">
    <location>
        <position position="445"/>
    </location>
</feature>
<feature type="cross-link" description="Glycyl lysine isopeptide (Lys-Gly) (interchain with G-Cter in SUMO)" evidence="13 17">
    <location>
        <position position="391"/>
    </location>
</feature>
<feature type="splice variant" id="VSP_043339" description="In isoform 4." evidence="27">
    <location>
        <begin position="87"/>
        <end position="134"/>
    </location>
</feature>
<feature type="splice variant" id="VSP_046251" description="In isoform 6." evidence="24">
    <original>TLRKKGLNGCDSPDPDADDSVGHSPESEDKYRKINEDIDLMISRQRLC</original>
    <variation>ALNKKENKGCESPDPDSSYALTPRTEEKYKKINEEFDNMIKSHKIP</variation>
    <location>
        <begin position="87"/>
        <end position="134"/>
    </location>
</feature>
<feature type="splice variant" id="VSP_045478" description="In isoform 5." evidence="24">
    <original>VGHSPESEDKYRKINEDIDLMISRQRLC</original>
    <variation>ALNKKENKGCESPDPDSSYALTPRTEEKYKKINEEFDNMIKSHKIP</variation>
    <location>
        <begin position="107"/>
        <end position="134"/>
    </location>
</feature>
<feature type="splice variant" id="VSP_006248" description="In isoform 2, isoform 4, isoform 5 and isoform 6." evidence="24 25 26 27">
    <location>
        <begin position="271"/>
        <end position="278"/>
    </location>
</feature>
<feature type="splice variant" id="VSP_006249" description="In isoform 3." evidence="25">
    <location>
        <begin position="368"/>
        <end position="399"/>
    </location>
</feature>
<feature type="sequence variant" id="VAR_078228" description="Found in a patient with infantile onset epileptic encephalopathy and autism spectrum disorder; likely pathogenic." evidence="20">
    <original>S</original>
    <variation>R</variation>
    <location>
        <position position="36"/>
    </location>
</feature>
<feature type="sequence variant" id="VAR_078621" description="Found in a patient with infantile onset epileptic encephalopathy and autism spectrum disorder; likely pathogenic; dbSNP:rs796052729." evidence="19">
    <original>C</original>
    <variation>R</variation>
    <location>
        <position position="39"/>
    </location>
</feature>
<feature type="mutagenesis site" description="Reduced acetylation. Further reduction in acetylation; when associated with R-119. Complete loss of acetylation, 15% less transactivation activity and slightly reduced DNA binding; when associated with R-119; R-234; R-239; R-252 and R-262." evidence="14">
    <original>K</original>
    <variation>R</variation>
    <location>
        <position position="116"/>
    </location>
</feature>
<feature type="mutagenesis site" description="Reduced acetylation. Further reduction in acetylation; when associated with R-119. Complete loss of acetylation, 15% less transactivation activity and slightly reduced DNA binding; when associated with R-116; R-234; R-239; R-252 and R-262." evidence="14">
    <original>K</original>
    <variation>R</variation>
    <location>
        <position position="119"/>
    </location>
</feature>
<feature type="mutagenesis site" description="Reduced acetylation. Complete loss of acetylation, 15% less transactivation activity and slightly reduced DNA binding; when associated with R-116; R-119; R-239; R-252 and R-264." evidence="14">
    <original>K</original>
    <variation>R</variation>
    <location>
        <position position="234"/>
    </location>
</feature>
<feature type="mutagenesis site" description="Reduced acetylation. Complete loss of acetylation, 15% less transactivation activity and slightly reduced DNA binding; when associated with R-116; R-119; R-234; R-252 and R-264." evidence="14">
    <original>K</original>
    <variation>R</variation>
    <location>
        <position position="239"/>
    </location>
</feature>
<feature type="mutagenesis site" description="Reduced acetylation. Complete loss of acetylation, 15% less transactivation activity and slightly reduced DNA binding; when associated with R-116; R-119; R-234; R-239 and R-264." evidence="14">
    <original>K</original>
    <variation>R</variation>
    <location>
        <position position="252"/>
    </location>
</feature>
<feature type="mutagenesis site" description="Reduced acetylation. Complete loss of acetylation, 15% less transactivation activity and slightly reduced DNA binding; when associated with R-116; R-119; R-234; R-239 and R-252." evidence="14">
    <original>K</original>
    <variation>R</variation>
    <location>
        <position position="264"/>
    </location>
</feature>
<feature type="mutagenesis site" description="No effect on transcriptional activation." evidence="15">
    <original>S</original>
    <variation>A</variation>
    <location>
        <position position="271"/>
    </location>
</feature>
<feature type="mutagenesis site" description="Reduced transcriptional activation. Completely abolishes transcriptional activation; when associated with N-273 and N-275." evidence="15">
    <original>E</original>
    <variation>Q</variation>
    <location>
        <position position="272"/>
    </location>
</feature>
<feature type="mutagenesis site" description="Reduced transcriptional activation. Completely abolishes transcriptional activation; when associated with Q-272 and N-275." evidence="15">
    <original>D</original>
    <variation>N</variation>
    <location>
        <position position="273"/>
    </location>
</feature>
<feature type="mutagenesis site" description="Reduced transcriptional activation. Completely abolishes transcriptional activation; when associated with Q-272 and N-273." evidence="15">
    <original>D</original>
    <variation>N</variation>
    <location>
        <position position="275"/>
    </location>
</feature>
<feature type="mutagenesis site" description="Abolishes MAPK14-mediated phosphorylation. No effect on MAPK7-mediated phosphorylation; when associated with A-300." evidence="21 22">
    <original>T</original>
    <variation>A</variation>
    <location>
        <position position="293"/>
    </location>
</feature>
<feature type="mutagenesis site" description="Abolishes MAPK14-mediated phosphorylation. No effect on MAPK7-mediated phosphorylation; when associated with A-293." evidence="21 22">
    <original>T</original>
    <variation>A</variation>
    <location>
        <position position="300"/>
    </location>
</feature>
<feature type="mutagenesis site" description="No change in transactivational activation for isoforms with or without the beta domain." evidence="15">
    <original>S</original>
    <variation>A</variation>
    <location>
        <position position="387"/>
    </location>
</feature>
<feature type="mutagenesis site" description="Abolishes sumoylation." evidence="17">
    <original>K</original>
    <variation>R</variation>
    <location>
        <position position="391"/>
    </location>
</feature>
<feature type="mutagenesis site" description="Abolishes sumoylation. Enhanced transcriptional activity." evidence="11 15 17">
    <original>S</original>
    <variation>A</variation>
    <variation>C</variation>
    <location>
        <position position="396"/>
    </location>
</feature>
<feature type="mutagenesis site" description="No change in transactivational activation for isoforms with or without the beta domain." evidence="11 15 17">
    <original>S</original>
    <variation>A</variation>
    <location>
        <position position="396"/>
    </location>
</feature>
<feature type="mutagenesis site" description="No effect on sumoylation. No effect on transcriptional activity." evidence="11 15 17">
    <original>S</original>
    <variation>E</variation>
    <location>
        <position position="396"/>
    </location>
</feature>
<feature type="mutagenesis site" description="No effect on MAPK14-mediated phosphorylation. Abolishes MAPK7-mediated phosphorylation and reduces transactivation activity." evidence="21 22">
    <original>S</original>
    <variation>A</variation>
    <location>
        <position position="419"/>
    </location>
</feature>
<feature type="mutagenesis site" description="Abolishes cleavage by caspase 7." evidence="10">
    <original>D</original>
    <variation>A</variation>
    <location>
        <position position="432"/>
    </location>
</feature>
<feature type="sequence conflict" description="In Ref. 4; AL833268." evidence="28" ref="4">
    <original>I</original>
    <variation>T</variation>
    <location>
        <position position="390"/>
    </location>
</feature>